<proteinExistence type="inferred from homology"/>
<evidence type="ECO:0000255" key="1">
    <source>
        <dbReference type="HAMAP-Rule" id="MF_01325"/>
    </source>
</evidence>
<evidence type="ECO:0000256" key="2">
    <source>
        <dbReference type="SAM" id="MobiDB-lite"/>
    </source>
</evidence>
<evidence type="ECO:0000305" key="3"/>
<accession>B1XJT9</accession>
<gene>
    <name evidence="1" type="primary">rplC</name>
    <name evidence="1" type="synonym">rpl3</name>
    <name type="ordered locus">SYNPCC7002_A1065</name>
</gene>
<dbReference type="EMBL" id="CP000951">
    <property type="protein sequence ID" value="ACA99067.1"/>
    <property type="molecule type" value="Genomic_DNA"/>
</dbReference>
<dbReference type="RefSeq" id="WP_012306690.1">
    <property type="nucleotide sequence ID" value="NZ_JAHHPU010000001.1"/>
</dbReference>
<dbReference type="SMR" id="B1XJT9"/>
<dbReference type="STRING" id="32049.SYNPCC7002_A1065"/>
<dbReference type="KEGG" id="syp:SYNPCC7002_A1065"/>
<dbReference type="eggNOG" id="COG0087">
    <property type="taxonomic scope" value="Bacteria"/>
</dbReference>
<dbReference type="HOGENOM" id="CLU_044142_4_1_3"/>
<dbReference type="Proteomes" id="UP000001688">
    <property type="component" value="Chromosome"/>
</dbReference>
<dbReference type="GO" id="GO:0022625">
    <property type="term" value="C:cytosolic large ribosomal subunit"/>
    <property type="evidence" value="ECO:0007669"/>
    <property type="project" value="TreeGrafter"/>
</dbReference>
<dbReference type="GO" id="GO:0019843">
    <property type="term" value="F:rRNA binding"/>
    <property type="evidence" value="ECO:0007669"/>
    <property type="project" value="UniProtKB-UniRule"/>
</dbReference>
<dbReference type="GO" id="GO:0003735">
    <property type="term" value="F:structural constituent of ribosome"/>
    <property type="evidence" value="ECO:0007669"/>
    <property type="project" value="InterPro"/>
</dbReference>
<dbReference type="GO" id="GO:0006412">
    <property type="term" value="P:translation"/>
    <property type="evidence" value="ECO:0007669"/>
    <property type="project" value="UniProtKB-UniRule"/>
</dbReference>
<dbReference type="FunFam" id="3.30.160.810:FF:000001">
    <property type="entry name" value="50S ribosomal protein L3"/>
    <property type="match status" value="1"/>
</dbReference>
<dbReference type="FunFam" id="2.40.30.10:FF:000065">
    <property type="entry name" value="50S ribosomal protein L3, chloroplastic"/>
    <property type="match status" value="1"/>
</dbReference>
<dbReference type="Gene3D" id="3.30.160.810">
    <property type="match status" value="1"/>
</dbReference>
<dbReference type="Gene3D" id="2.40.30.10">
    <property type="entry name" value="Translation factors"/>
    <property type="match status" value="1"/>
</dbReference>
<dbReference type="HAMAP" id="MF_01325_B">
    <property type="entry name" value="Ribosomal_uL3_B"/>
    <property type="match status" value="1"/>
</dbReference>
<dbReference type="InterPro" id="IPR000597">
    <property type="entry name" value="Ribosomal_uL3"/>
</dbReference>
<dbReference type="InterPro" id="IPR019927">
    <property type="entry name" value="Ribosomal_uL3_bac/org-type"/>
</dbReference>
<dbReference type="InterPro" id="IPR019926">
    <property type="entry name" value="Ribosomal_uL3_CS"/>
</dbReference>
<dbReference type="InterPro" id="IPR009000">
    <property type="entry name" value="Transl_B-barrel_sf"/>
</dbReference>
<dbReference type="NCBIfam" id="TIGR03625">
    <property type="entry name" value="L3_bact"/>
    <property type="match status" value="1"/>
</dbReference>
<dbReference type="PANTHER" id="PTHR11229">
    <property type="entry name" value="50S RIBOSOMAL PROTEIN L3"/>
    <property type="match status" value="1"/>
</dbReference>
<dbReference type="PANTHER" id="PTHR11229:SF16">
    <property type="entry name" value="LARGE RIBOSOMAL SUBUNIT PROTEIN UL3C"/>
    <property type="match status" value="1"/>
</dbReference>
<dbReference type="Pfam" id="PF00297">
    <property type="entry name" value="Ribosomal_L3"/>
    <property type="match status" value="1"/>
</dbReference>
<dbReference type="SUPFAM" id="SSF50447">
    <property type="entry name" value="Translation proteins"/>
    <property type="match status" value="1"/>
</dbReference>
<dbReference type="PROSITE" id="PS00474">
    <property type="entry name" value="RIBOSOMAL_L3"/>
    <property type="match status" value="1"/>
</dbReference>
<name>RL3_PICP2</name>
<comment type="function">
    <text evidence="1">One of the primary rRNA binding proteins, it binds directly near the 3'-end of the 23S rRNA, where it nucleates assembly of the 50S subunit.</text>
</comment>
<comment type="subunit">
    <text evidence="1">Part of the 50S ribosomal subunit. Forms a cluster with proteins L14 and L19.</text>
</comment>
<comment type="similarity">
    <text evidence="1">Belongs to the universal ribosomal protein uL3 family.</text>
</comment>
<protein>
    <recommendedName>
        <fullName evidence="1">Large ribosomal subunit protein uL3</fullName>
    </recommendedName>
    <alternativeName>
        <fullName evidence="3">50S ribosomal protein L3</fullName>
    </alternativeName>
</protein>
<feature type="chain" id="PRO_1000141932" description="Large ribosomal subunit protein uL3">
    <location>
        <begin position="1"/>
        <end position="213"/>
    </location>
</feature>
<feature type="region of interest" description="Disordered" evidence="2">
    <location>
        <begin position="130"/>
        <end position="161"/>
    </location>
</feature>
<sequence length="213" mass="22731">MSLGILGTKLGMTQIFDNETGTAIPVTVVQAGPCTVTQIKTSETDGYTSVQIGYGDVKEKNLTKPQLGHLKKADAAPLRHLKEYRLDDVSGYELGQAITANIFEAGQVVDVSGNTIGRGFAGYQKRHNFKRGNMTHGSKNHRLPGSTGAGTTPGRVYPGKRMAGRYGGTKITVRKLEVVRVDEEKNLLLIKGAIPGKAGNLLSIAPSNIVGQK</sequence>
<organism>
    <name type="scientific">Picosynechococcus sp. (strain ATCC 27264 / PCC 7002 / PR-6)</name>
    <name type="common">Agmenellum quadruplicatum</name>
    <dbReference type="NCBI Taxonomy" id="32049"/>
    <lineage>
        <taxon>Bacteria</taxon>
        <taxon>Bacillati</taxon>
        <taxon>Cyanobacteriota</taxon>
        <taxon>Cyanophyceae</taxon>
        <taxon>Oscillatoriophycideae</taxon>
        <taxon>Chroococcales</taxon>
        <taxon>Geminocystaceae</taxon>
        <taxon>Picosynechococcus</taxon>
    </lineage>
</organism>
<reference key="1">
    <citation type="submission" date="2008-02" db="EMBL/GenBank/DDBJ databases">
        <title>Complete sequence of Synechococcus sp. PCC 7002.</title>
        <authorList>
            <person name="Li T."/>
            <person name="Zhao J."/>
            <person name="Zhao C."/>
            <person name="Liu Z."/>
            <person name="Zhao F."/>
            <person name="Marquardt J."/>
            <person name="Nomura C.T."/>
            <person name="Persson S."/>
            <person name="Detter J.C."/>
            <person name="Richardson P.M."/>
            <person name="Lanz C."/>
            <person name="Schuster S.C."/>
            <person name="Wang J."/>
            <person name="Li S."/>
            <person name="Huang X."/>
            <person name="Cai T."/>
            <person name="Yu Z."/>
            <person name="Luo J."/>
            <person name="Zhao J."/>
            <person name="Bryant D.A."/>
        </authorList>
    </citation>
    <scope>NUCLEOTIDE SEQUENCE [LARGE SCALE GENOMIC DNA]</scope>
    <source>
        <strain>ATCC 27264 / PCC 7002 / PR-6</strain>
    </source>
</reference>
<keyword id="KW-1185">Reference proteome</keyword>
<keyword id="KW-0687">Ribonucleoprotein</keyword>
<keyword id="KW-0689">Ribosomal protein</keyword>
<keyword id="KW-0694">RNA-binding</keyword>
<keyword id="KW-0699">rRNA-binding</keyword>